<dbReference type="EC" id="4.2.1.113" evidence="1"/>
<dbReference type="EMBL" id="CP000611">
    <property type="protein sequence ID" value="ABQ72283.1"/>
    <property type="molecule type" value="Genomic_DNA"/>
</dbReference>
<dbReference type="RefSeq" id="WP_003402923.1">
    <property type="nucleotide sequence ID" value="NZ_CP016972.1"/>
</dbReference>
<dbReference type="SMR" id="A5TZT3"/>
<dbReference type="KEGG" id="mra:MRA_0560"/>
<dbReference type="eggNOG" id="COG4948">
    <property type="taxonomic scope" value="Bacteria"/>
</dbReference>
<dbReference type="HOGENOM" id="CLU_057696_0_0_11"/>
<dbReference type="UniPathway" id="UPA00079"/>
<dbReference type="UniPathway" id="UPA01057">
    <property type="reaction ID" value="UER00165"/>
</dbReference>
<dbReference type="Proteomes" id="UP000001988">
    <property type="component" value="Chromosome"/>
</dbReference>
<dbReference type="GO" id="GO:0000287">
    <property type="term" value="F:magnesium ion binding"/>
    <property type="evidence" value="ECO:0007669"/>
    <property type="project" value="UniProtKB-UniRule"/>
</dbReference>
<dbReference type="GO" id="GO:0043748">
    <property type="term" value="F:O-succinylbenzoate synthase activity"/>
    <property type="evidence" value="ECO:0007669"/>
    <property type="project" value="UniProtKB-EC"/>
</dbReference>
<dbReference type="GO" id="GO:0009234">
    <property type="term" value="P:menaquinone biosynthetic process"/>
    <property type="evidence" value="ECO:0007669"/>
    <property type="project" value="UniProtKB-UniRule"/>
</dbReference>
<dbReference type="CDD" id="cd03320">
    <property type="entry name" value="OSBS"/>
    <property type="match status" value="1"/>
</dbReference>
<dbReference type="Gene3D" id="3.20.20.120">
    <property type="entry name" value="Enolase-like C-terminal domain"/>
    <property type="match status" value="1"/>
</dbReference>
<dbReference type="HAMAP" id="MF_00470">
    <property type="entry name" value="MenC_1"/>
    <property type="match status" value="1"/>
</dbReference>
<dbReference type="InterPro" id="IPR036849">
    <property type="entry name" value="Enolase-like_C_sf"/>
</dbReference>
<dbReference type="InterPro" id="IPR029065">
    <property type="entry name" value="Enolase_C-like"/>
</dbReference>
<dbReference type="InterPro" id="IPR013342">
    <property type="entry name" value="Mandelate_racemase_C"/>
</dbReference>
<dbReference type="InterPro" id="IPR010196">
    <property type="entry name" value="OSB_synthase_MenC1"/>
</dbReference>
<dbReference type="NCBIfam" id="NF002782">
    <property type="entry name" value="PRK02901.1"/>
    <property type="match status" value="1"/>
</dbReference>
<dbReference type="PANTHER" id="PTHR48073:SF2">
    <property type="entry name" value="O-SUCCINYLBENZOATE SYNTHASE"/>
    <property type="match status" value="1"/>
</dbReference>
<dbReference type="PANTHER" id="PTHR48073">
    <property type="entry name" value="O-SUCCINYLBENZOATE SYNTHASE-RELATED"/>
    <property type="match status" value="1"/>
</dbReference>
<dbReference type="Pfam" id="PF18374">
    <property type="entry name" value="Enolase_like_N"/>
    <property type="match status" value="1"/>
</dbReference>
<dbReference type="Pfam" id="PF13378">
    <property type="entry name" value="MR_MLE_C"/>
    <property type="match status" value="1"/>
</dbReference>
<dbReference type="SFLD" id="SFLDG00180">
    <property type="entry name" value="muconate_cycloisomerase"/>
    <property type="match status" value="1"/>
</dbReference>
<dbReference type="SFLD" id="SFLDF00009">
    <property type="entry name" value="o-succinylbenzoate_synthase"/>
    <property type="match status" value="1"/>
</dbReference>
<dbReference type="SMART" id="SM00922">
    <property type="entry name" value="MR_MLE"/>
    <property type="match status" value="1"/>
</dbReference>
<dbReference type="SUPFAM" id="SSF51604">
    <property type="entry name" value="Enolase C-terminal domain-like"/>
    <property type="match status" value="1"/>
</dbReference>
<comment type="function">
    <text evidence="1">Converts 2-succinyl-6-hydroxy-2,4-cyclohexadiene-1-carboxylate (SHCHC) to 2-succinylbenzoate (OSB).</text>
</comment>
<comment type="catalytic activity">
    <reaction evidence="1">
        <text>(1R,6R)-6-hydroxy-2-succinyl-cyclohexa-2,4-diene-1-carboxylate = 2-succinylbenzoate + H2O</text>
        <dbReference type="Rhea" id="RHEA:10196"/>
        <dbReference type="ChEBI" id="CHEBI:15377"/>
        <dbReference type="ChEBI" id="CHEBI:18325"/>
        <dbReference type="ChEBI" id="CHEBI:58689"/>
        <dbReference type="EC" id="4.2.1.113"/>
    </reaction>
</comment>
<comment type="cofactor">
    <cofactor evidence="1">
        <name>a divalent metal cation</name>
        <dbReference type="ChEBI" id="CHEBI:60240"/>
    </cofactor>
</comment>
<comment type="pathway">
    <text evidence="1">Quinol/quinone metabolism; 1,4-dihydroxy-2-naphthoate biosynthesis; 1,4-dihydroxy-2-naphthoate from chorismate: step 4/7.</text>
</comment>
<comment type="pathway">
    <text evidence="1">Quinol/quinone metabolism; menaquinone biosynthesis.</text>
</comment>
<comment type="similarity">
    <text evidence="1">Belongs to the mandelate racemase/muconate lactonizing enzyme family. MenC type 1 subfamily.</text>
</comment>
<feature type="chain" id="PRO_1000013806" description="o-succinylbenzoate synthase">
    <location>
        <begin position="1"/>
        <end position="326"/>
    </location>
</feature>
<feature type="active site" description="Proton donor" evidence="1">
    <location>
        <position position="110"/>
    </location>
</feature>
<feature type="active site" description="Proton acceptor" evidence="1">
    <location>
        <position position="212"/>
    </location>
</feature>
<feature type="binding site" evidence="1">
    <location>
        <position position="138"/>
    </location>
    <ligand>
        <name>Mg(2+)</name>
        <dbReference type="ChEBI" id="CHEBI:18420"/>
    </ligand>
</feature>
<feature type="binding site" evidence="1">
    <location>
        <position position="165"/>
    </location>
    <ligand>
        <name>Mg(2+)</name>
        <dbReference type="ChEBI" id="CHEBI:18420"/>
    </ligand>
</feature>
<feature type="binding site" evidence="1">
    <location>
        <position position="188"/>
    </location>
    <ligand>
        <name>Mg(2+)</name>
        <dbReference type="ChEBI" id="CHEBI:18420"/>
    </ligand>
</feature>
<proteinExistence type="inferred from homology"/>
<evidence type="ECO:0000255" key="1">
    <source>
        <dbReference type="HAMAP-Rule" id="MF_00470"/>
    </source>
</evidence>
<reference key="1">
    <citation type="journal article" date="2008" name="PLoS ONE">
        <title>Genetic basis of virulence attenuation revealed by comparative genomic analysis of Mycobacterium tuberculosis strain H37Ra versus H37Rv.</title>
        <authorList>
            <person name="Zheng H."/>
            <person name="Lu L."/>
            <person name="Wang B."/>
            <person name="Pu S."/>
            <person name="Zhang X."/>
            <person name="Zhu G."/>
            <person name="Shi W."/>
            <person name="Zhang L."/>
            <person name="Wang H."/>
            <person name="Wang S."/>
            <person name="Zhao G."/>
            <person name="Zhang Y."/>
        </authorList>
    </citation>
    <scope>NUCLEOTIDE SEQUENCE [LARGE SCALE GENOMIC DNA]</scope>
    <source>
        <strain>ATCC 25177 / H37Ra</strain>
    </source>
</reference>
<keyword id="KW-0456">Lyase</keyword>
<keyword id="KW-0460">Magnesium</keyword>
<keyword id="KW-0474">Menaquinone biosynthesis</keyword>
<keyword id="KW-0479">Metal-binding</keyword>
<keyword id="KW-1185">Reference proteome</keyword>
<name>MENC_MYCTA</name>
<protein>
    <recommendedName>
        <fullName evidence="1">o-succinylbenzoate synthase</fullName>
        <shortName evidence="1">OSB synthase</shortName>
        <shortName evidence="1">OSBS</shortName>
        <ecNumber evidence="1">4.2.1.113</ecNumber>
    </recommendedName>
    <alternativeName>
        <fullName evidence="1">4-(2'-carboxyphenyl)-4-oxybutyric acid synthase</fullName>
    </alternativeName>
    <alternativeName>
        <fullName evidence="1">o-succinylbenzoic acid synthase</fullName>
    </alternativeName>
</protein>
<sequence>MIPVLPPLEALLDRLYVVALPMRVRFRGITTREVALIEGPAGWGEFGAFVEYQSAQACAWLASAIETAYCAPPPVRRDRVPINATVPAVAAAQVGEVLARFPGARTAKVKVAEPGQSLADDIERVNAVRELVPMVRVDANGGWGVAEAVAAAAALTADGPLEYLEQPCATVAELAELRRRVDVPIAADESIRKAEDPLAVVRAQAADIAVLKVAPLGGISALLDIAARIAVPVVVSSALDSAVGIAAGLTAAAALPELDHACGLGTGGLFEEDVAEPAAPVDGFLAVARTTPDPARLQALGAPPQRRQWWIDRVKACYSLLVPSFG</sequence>
<organism>
    <name type="scientific">Mycobacterium tuberculosis (strain ATCC 25177 / H37Ra)</name>
    <dbReference type="NCBI Taxonomy" id="419947"/>
    <lineage>
        <taxon>Bacteria</taxon>
        <taxon>Bacillati</taxon>
        <taxon>Actinomycetota</taxon>
        <taxon>Actinomycetes</taxon>
        <taxon>Mycobacteriales</taxon>
        <taxon>Mycobacteriaceae</taxon>
        <taxon>Mycobacterium</taxon>
        <taxon>Mycobacterium tuberculosis complex</taxon>
    </lineage>
</organism>
<gene>
    <name evidence="1" type="primary">menC</name>
    <name type="ordered locus">MRA_0560</name>
</gene>
<accession>A5TZT3</accession>